<evidence type="ECO:0000250" key="1"/>
<evidence type="ECO:0000255" key="2">
    <source>
        <dbReference type="HAMAP-Rule" id="MF_01320"/>
    </source>
</evidence>
<evidence type="ECO:0000256" key="3">
    <source>
        <dbReference type="SAM" id="MobiDB-lite"/>
    </source>
</evidence>
<evidence type="ECO:0000305" key="4"/>
<geneLocation type="chloroplast"/>
<dbReference type="EMBL" id="DQ887676">
    <property type="protein sequence ID" value="ABH88338.1"/>
    <property type="molecule type" value="Genomic_DNA"/>
</dbReference>
<dbReference type="EMBL" id="DQ887676">
    <property type="protein sequence ID" value="ABH88363.1"/>
    <property type="molecule type" value="Genomic_DNA"/>
</dbReference>
<dbReference type="SMR" id="Q06GT2"/>
<dbReference type="GO" id="GO:0009507">
    <property type="term" value="C:chloroplast"/>
    <property type="evidence" value="ECO:0007669"/>
    <property type="project" value="UniProtKB-SubCell"/>
</dbReference>
<dbReference type="GO" id="GO:0005762">
    <property type="term" value="C:mitochondrial large ribosomal subunit"/>
    <property type="evidence" value="ECO:0007669"/>
    <property type="project" value="TreeGrafter"/>
</dbReference>
<dbReference type="GO" id="GO:0019843">
    <property type="term" value="F:rRNA binding"/>
    <property type="evidence" value="ECO:0007669"/>
    <property type="project" value="UniProtKB-UniRule"/>
</dbReference>
<dbReference type="GO" id="GO:0003735">
    <property type="term" value="F:structural constituent of ribosome"/>
    <property type="evidence" value="ECO:0007669"/>
    <property type="project" value="InterPro"/>
</dbReference>
<dbReference type="GO" id="GO:0016740">
    <property type="term" value="F:transferase activity"/>
    <property type="evidence" value="ECO:0007669"/>
    <property type="project" value="InterPro"/>
</dbReference>
<dbReference type="GO" id="GO:0032543">
    <property type="term" value="P:mitochondrial translation"/>
    <property type="evidence" value="ECO:0007669"/>
    <property type="project" value="TreeGrafter"/>
</dbReference>
<dbReference type="FunFam" id="4.10.950.10:FF:000001">
    <property type="entry name" value="50S ribosomal protein L2"/>
    <property type="match status" value="1"/>
</dbReference>
<dbReference type="FunFam" id="2.30.30.30:FF:000008">
    <property type="entry name" value="50S ribosomal protein L2, chloroplastic"/>
    <property type="match status" value="1"/>
</dbReference>
<dbReference type="FunFam" id="2.40.50.140:FF:000029">
    <property type="entry name" value="50S ribosomal protein L2, chloroplastic"/>
    <property type="match status" value="1"/>
</dbReference>
<dbReference type="Gene3D" id="2.30.30.30">
    <property type="match status" value="1"/>
</dbReference>
<dbReference type="Gene3D" id="2.40.50.140">
    <property type="entry name" value="Nucleic acid-binding proteins"/>
    <property type="match status" value="1"/>
</dbReference>
<dbReference type="Gene3D" id="4.10.950.10">
    <property type="entry name" value="Ribosomal protein L2, domain 3"/>
    <property type="match status" value="1"/>
</dbReference>
<dbReference type="HAMAP" id="MF_01320_B">
    <property type="entry name" value="Ribosomal_uL2_B"/>
    <property type="match status" value="1"/>
</dbReference>
<dbReference type="InterPro" id="IPR012340">
    <property type="entry name" value="NA-bd_OB-fold"/>
</dbReference>
<dbReference type="InterPro" id="IPR014722">
    <property type="entry name" value="Rib_uL2_dom2"/>
</dbReference>
<dbReference type="InterPro" id="IPR002171">
    <property type="entry name" value="Ribosomal_uL2"/>
</dbReference>
<dbReference type="InterPro" id="IPR005880">
    <property type="entry name" value="Ribosomal_uL2_bac/org-type"/>
</dbReference>
<dbReference type="InterPro" id="IPR022669">
    <property type="entry name" value="Ribosomal_uL2_C"/>
</dbReference>
<dbReference type="InterPro" id="IPR022671">
    <property type="entry name" value="Ribosomal_uL2_CS"/>
</dbReference>
<dbReference type="InterPro" id="IPR014726">
    <property type="entry name" value="Ribosomal_uL2_dom3"/>
</dbReference>
<dbReference type="InterPro" id="IPR022666">
    <property type="entry name" value="Ribosomal_uL2_RNA-bd_dom"/>
</dbReference>
<dbReference type="InterPro" id="IPR008991">
    <property type="entry name" value="Translation_prot_SH3-like_sf"/>
</dbReference>
<dbReference type="NCBIfam" id="TIGR01171">
    <property type="entry name" value="rplB_bact"/>
    <property type="match status" value="1"/>
</dbReference>
<dbReference type="PANTHER" id="PTHR13691:SF5">
    <property type="entry name" value="LARGE RIBOSOMAL SUBUNIT PROTEIN UL2M"/>
    <property type="match status" value="1"/>
</dbReference>
<dbReference type="PANTHER" id="PTHR13691">
    <property type="entry name" value="RIBOSOMAL PROTEIN L2"/>
    <property type="match status" value="1"/>
</dbReference>
<dbReference type="Pfam" id="PF00181">
    <property type="entry name" value="Ribosomal_L2"/>
    <property type="match status" value="1"/>
</dbReference>
<dbReference type="Pfam" id="PF03947">
    <property type="entry name" value="Ribosomal_L2_C"/>
    <property type="match status" value="1"/>
</dbReference>
<dbReference type="PIRSF" id="PIRSF002158">
    <property type="entry name" value="Ribosomal_L2"/>
    <property type="match status" value="1"/>
</dbReference>
<dbReference type="SMART" id="SM01383">
    <property type="entry name" value="Ribosomal_L2"/>
    <property type="match status" value="1"/>
</dbReference>
<dbReference type="SMART" id="SM01382">
    <property type="entry name" value="Ribosomal_L2_C"/>
    <property type="match status" value="1"/>
</dbReference>
<dbReference type="SUPFAM" id="SSF50249">
    <property type="entry name" value="Nucleic acid-binding proteins"/>
    <property type="match status" value="1"/>
</dbReference>
<dbReference type="SUPFAM" id="SSF50104">
    <property type="entry name" value="Translation proteins SH3-like domain"/>
    <property type="match status" value="1"/>
</dbReference>
<dbReference type="PROSITE" id="PS00467">
    <property type="entry name" value="RIBOSOMAL_L2"/>
    <property type="match status" value="1"/>
</dbReference>
<protein>
    <recommendedName>
        <fullName evidence="2">Large ribosomal subunit protein uL2cz/uL2cy</fullName>
    </recommendedName>
    <alternativeName>
        <fullName evidence="4">50S ribosomal protein L2, chloroplastic</fullName>
    </alternativeName>
</protein>
<comment type="subunit">
    <text evidence="1">Part of the 50S ribosomal subunit.</text>
</comment>
<comment type="subcellular location">
    <subcellularLocation>
        <location>Plastid</location>
        <location>Chloroplast</location>
    </subcellularLocation>
</comment>
<comment type="similarity">
    <text evidence="4">Belongs to the universal ribosomal protein uL2 family.</text>
</comment>
<proteinExistence type="inferred from homology"/>
<sequence>MAIHLYKTSTPSTRNGAVDSQVKSNPRNNLIYGQHHCGKGRNARGIITAGHRGGGHKRLYRKIDFRRNEKDISGRIVTIEYDPNRNAYICLIHYGDGEKRYILHPRGAIIGDTIVSGTEVPISMGNALPLTDMPLGTAIHNIEITLGKGGQLARAAGAVAKLIAKEGKSATLRLPSGEVRLIYKNCLATVGQVGNVGVNQKNLGRAGSKCWLGKRPVVRGVAMNPVDHPHGGGEGRAPIGRKKPTTPWGYPALGRRSRKRNKYSDIYILRRRK</sequence>
<keyword id="KW-0150">Chloroplast</keyword>
<keyword id="KW-0934">Plastid</keyword>
<keyword id="KW-0687">Ribonucleoprotein</keyword>
<keyword id="KW-0689">Ribosomal protein</keyword>
<feature type="chain" id="PRO_0000277088" description="Large ribosomal subunit protein uL2cz/uL2cy">
    <location>
        <begin position="1"/>
        <end position="273"/>
    </location>
</feature>
<feature type="region of interest" description="Disordered" evidence="3">
    <location>
        <begin position="1"/>
        <end position="22"/>
    </location>
</feature>
<feature type="region of interest" description="Disordered" evidence="3">
    <location>
        <begin position="223"/>
        <end position="254"/>
    </location>
</feature>
<reference key="1">
    <citation type="journal article" date="2006" name="BMC Evol. Biol.">
        <title>Complete plastid genome sequences of Drimys, Liriodendron, and Piper: implications for the phylogenetic relationships of magnoliids.</title>
        <authorList>
            <person name="Cai Z."/>
            <person name="Penaflor C."/>
            <person name="Kuehl J.V."/>
            <person name="Leebens-Mack J."/>
            <person name="Carlson J.E."/>
            <person name="dePamphilis C.W."/>
            <person name="Boore J.L."/>
            <person name="Jansen R.K."/>
        </authorList>
    </citation>
    <scope>NUCLEOTIDE SEQUENCE [LARGE SCALE GENOMIC DNA]</scope>
</reference>
<organism>
    <name type="scientific">Drimys granadensis</name>
    <dbReference type="NCBI Taxonomy" id="224735"/>
    <lineage>
        <taxon>Eukaryota</taxon>
        <taxon>Viridiplantae</taxon>
        <taxon>Streptophyta</taxon>
        <taxon>Embryophyta</taxon>
        <taxon>Tracheophyta</taxon>
        <taxon>Spermatophyta</taxon>
        <taxon>Magnoliopsida</taxon>
        <taxon>Magnoliidae</taxon>
        <taxon>Canellales</taxon>
        <taxon>Winteraceae</taxon>
        <taxon>Drimys</taxon>
    </lineage>
</organism>
<accession>Q06GT2</accession>
<name>RK2_DRIGR</name>
<gene>
    <name type="primary">rpl2-A</name>
</gene>
<gene>
    <name type="primary">rpl2-B</name>
</gene>